<comment type="catalytic activity">
    <reaction>
        <text>Preferential cleavage: Ala-|-Xaa, Val-|-Xaa in bacterial cell walls, elastin and other proteins.</text>
        <dbReference type="EC" id="3.4.21.12"/>
    </reaction>
</comment>
<comment type="similarity">
    <text evidence="1">Belongs to the peptidase S1 family.</text>
</comment>
<feature type="chain" id="PRO_0000093855" description="Alpha-lytic protease">
    <location>
        <begin position="1"/>
        <end position="25" status="greater than"/>
    </location>
</feature>
<feature type="unsure residue">
    <location>
        <position position="17"/>
    </location>
</feature>
<feature type="non-terminal residue">
    <location>
        <position position="25"/>
    </location>
</feature>
<sequence>ANIVGGIEYSINNASICSVGFSVTR</sequence>
<evidence type="ECO:0000305" key="1"/>
<proteinExistence type="evidence at protein level"/>
<organism>
    <name type="scientific">Achromobacter lyticus</name>
    <dbReference type="NCBI Taxonomy" id="224"/>
    <lineage>
        <taxon>Bacteria</taxon>
        <taxon>Pseudomonadati</taxon>
        <taxon>Pseudomonadota</taxon>
        <taxon>Betaproteobacteria</taxon>
        <taxon>Burkholderiales</taxon>
        <taxon>Alcaligenaceae</taxon>
        <taxon>Achromobacter</taxon>
    </lineage>
</organism>
<name>PRLA_ACHLY</name>
<accession>P27459</accession>
<protein>
    <recommendedName>
        <fullName>Alpha-lytic protease</fullName>
        <ecNumber>3.4.21.12</ecNumber>
    </recommendedName>
    <alternativeName>
        <fullName>Alpha-lytic endopeptidase</fullName>
    </alternativeName>
</protein>
<dbReference type="EC" id="3.4.21.12"/>
<dbReference type="SMR" id="P27459"/>
<dbReference type="GO" id="GO:0008236">
    <property type="term" value="F:serine-type peptidase activity"/>
    <property type="evidence" value="ECO:0007669"/>
    <property type="project" value="UniProtKB-KW"/>
</dbReference>
<dbReference type="GO" id="GO:0006508">
    <property type="term" value="P:proteolysis"/>
    <property type="evidence" value="ECO:0007669"/>
    <property type="project" value="UniProtKB-KW"/>
</dbReference>
<dbReference type="Gene3D" id="2.40.10.10">
    <property type="entry name" value="Trypsin-like serine proteases"/>
    <property type="match status" value="1"/>
</dbReference>
<dbReference type="InterPro" id="IPR043504">
    <property type="entry name" value="Peptidase_S1_PA_chymotrypsin"/>
</dbReference>
<keyword id="KW-0903">Direct protein sequencing</keyword>
<keyword id="KW-0378">Hydrolase</keyword>
<keyword id="KW-0645">Protease</keyword>
<keyword id="KW-0720">Serine protease</keyword>
<keyword id="KW-0865">Zymogen</keyword>
<reference key="1">
    <citation type="journal article" date="1990" name="J. Bacteriol.">
        <title>Molecular cloning and nucleotide sequence of the beta-lytic protease gene from Achromobacter lyticus.</title>
        <authorList>
            <person name="Li S.L."/>
            <person name="Norioka S."/>
            <person name="Sakiyama F."/>
        </authorList>
    </citation>
    <scope>PROTEIN SEQUENCE</scope>
    <source>
        <strain>M497-1</strain>
    </source>
</reference>